<protein>
    <recommendedName>
        <fullName>ATP-dependent DNA helicase Pif1</fullName>
        <ecNumber evidence="3">5.6.2.3</ecNumber>
    </recommendedName>
    <alternativeName>
        <fullName evidence="4">DNA 5'-3' helicase Pif1</fullName>
    </alternativeName>
</protein>
<proteinExistence type="evidence at protein level"/>
<evidence type="ECO:0000250" key="1">
    <source>
        <dbReference type="UniProtKB" id="P07271"/>
    </source>
</evidence>
<evidence type="ECO:0000250" key="2">
    <source>
        <dbReference type="UniProtKB" id="Q9H611"/>
    </source>
</evidence>
<evidence type="ECO:0000269" key="3">
    <source>
    </source>
</evidence>
<evidence type="ECO:0000305" key="4"/>
<gene>
    <name type="primary">pif1</name>
    <name type="ordered locus">Bd3546</name>
</gene>
<accession>Q6MHJ5</accession>
<feature type="chain" id="PRO_0000423710" description="ATP-dependent DNA helicase Pif1">
    <location>
        <begin position="1"/>
        <end position="439"/>
    </location>
</feature>
<organism>
    <name type="scientific">Bdellovibrio bacteriovorus (strain ATCC 15356 / DSM 50701 / NCIMB 9529 / HD100)</name>
    <dbReference type="NCBI Taxonomy" id="264462"/>
    <lineage>
        <taxon>Bacteria</taxon>
        <taxon>Pseudomonadati</taxon>
        <taxon>Bdellovibrionota</taxon>
        <taxon>Bdellovibrionia</taxon>
        <taxon>Bdellovibrionales</taxon>
        <taxon>Pseudobdellovibrionaceae</taxon>
        <taxon>Bdellovibrio</taxon>
    </lineage>
</organism>
<dbReference type="EC" id="5.6.2.3" evidence="3"/>
<dbReference type="EMBL" id="BX842655">
    <property type="protein sequence ID" value="CAE78337.1"/>
    <property type="molecule type" value="Genomic_DNA"/>
</dbReference>
<dbReference type="RefSeq" id="WP_011165875.1">
    <property type="nucleotide sequence ID" value="NC_005363.1"/>
</dbReference>
<dbReference type="SMR" id="Q6MHJ5"/>
<dbReference type="STRING" id="264462.Bd3546"/>
<dbReference type="GeneID" id="93014349"/>
<dbReference type="KEGG" id="bba:Bd3546"/>
<dbReference type="eggNOG" id="COG0507">
    <property type="taxonomic scope" value="Bacteria"/>
</dbReference>
<dbReference type="HOGENOM" id="CLU_001613_7_1_7"/>
<dbReference type="Proteomes" id="UP000008080">
    <property type="component" value="Chromosome"/>
</dbReference>
<dbReference type="GO" id="GO:0005524">
    <property type="term" value="F:ATP binding"/>
    <property type="evidence" value="ECO:0007669"/>
    <property type="project" value="UniProtKB-KW"/>
</dbReference>
<dbReference type="GO" id="GO:0016887">
    <property type="term" value="F:ATP hydrolysis activity"/>
    <property type="evidence" value="ECO:0007669"/>
    <property type="project" value="InterPro"/>
</dbReference>
<dbReference type="GO" id="GO:0003677">
    <property type="term" value="F:DNA binding"/>
    <property type="evidence" value="ECO:0007669"/>
    <property type="project" value="UniProtKB-KW"/>
</dbReference>
<dbReference type="GO" id="GO:0003678">
    <property type="term" value="F:DNA helicase activity"/>
    <property type="evidence" value="ECO:0007669"/>
    <property type="project" value="InterPro"/>
</dbReference>
<dbReference type="GO" id="GO:0006310">
    <property type="term" value="P:DNA recombination"/>
    <property type="evidence" value="ECO:0007669"/>
    <property type="project" value="UniProtKB-KW"/>
</dbReference>
<dbReference type="GO" id="GO:0006281">
    <property type="term" value="P:DNA repair"/>
    <property type="evidence" value="ECO:0007669"/>
    <property type="project" value="UniProtKB-KW"/>
</dbReference>
<dbReference type="GO" id="GO:0000723">
    <property type="term" value="P:telomere maintenance"/>
    <property type="evidence" value="ECO:0007669"/>
    <property type="project" value="InterPro"/>
</dbReference>
<dbReference type="CDD" id="cd18037">
    <property type="entry name" value="DEXSc_Pif1_like"/>
    <property type="match status" value="1"/>
</dbReference>
<dbReference type="CDD" id="cd18809">
    <property type="entry name" value="SF1_C_RecD"/>
    <property type="match status" value="1"/>
</dbReference>
<dbReference type="Gene3D" id="2.30.30.940">
    <property type="match status" value="1"/>
</dbReference>
<dbReference type="Gene3D" id="3.40.50.300">
    <property type="entry name" value="P-loop containing nucleotide triphosphate hydrolases"/>
    <property type="match status" value="1"/>
</dbReference>
<dbReference type="InterPro" id="IPR003593">
    <property type="entry name" value="AAA+_ATPase"/>
</dbReference>
<dbReference type="InterPro" id="IPR010285">
    <property type="entry name" value="DNA_helicase_pif1-like_DEAD"/>
</dbReference>
<dbReference type="InterPro" id="IPR027417">
    <property type="entry name" value="P-loop_NTPase"/>
</dbReference>
<dbReference type="InterPro" id="IPR049163">
    <property type="entry name" value="Pif1-like_2B_dom"/>
</dbReference>
<dbReference type="InterPro" id="IPR051055">
    <property type="entry name" value="PIF1_helicase"/>
</dbReference>
<dbReference type="PANTHER" id="PTHR47642">
    <property type="entry name" value="ATP-DEPENDENT DNA HELICASE"/>
    <property type="match status" value="1"/>
</dbReference>
<dbReference type="PANTHER" id="PTHR47642:SF7">
    <property type="entry name" value="ATP-DEPENDENT DNA HELICASE PIF1"/>
    <property type="match status" value="1"/>
</dbReference>
<dbReference type="Pfam" id="PF05970">
    <property type="entry name" value="PIF1"/>
    <property type="match status" value="1"/>
</dbReference>
<dbReference type="Pfam" id="PF21530">
    <property type="entry name" value="Pif1_2B_dom"/>
    <property type="match status" value="1"/>
</dbReference>
<dbReference type="SMART" id="SM00382">
    <property type="entry name" value="AAA"/>
    <property type="match status" value="1"/>
</dbReference>
<dbReference type="SUPFAM" id="SSF52540">
    <property type="entry name" value="P-loop containing nucleoside triphosphate hydrolases"/>
    <property type="match status" value="2"/>
</dbReference>
<comment type="function">
    <text evidence="3">DNA-dependent ATPase and 5'-3' DNA helicase that efficiently unwinds G-quadruplex (G4) DNA structures. May be involved in resolving commom issues that arise during DNA replication, recombination, and repair.</text>
</comment>
<comment type="catalytic activity">
    <reaction evidence="3">
        <text>Couples ATP hydrolysis with the unwinding of duplex DNA at the replication fork by translocating in the 5'-3' direction. This creates two antiparallel DNA single strands (ssDNA). The leading ssDNA polymer is the template for DNA polymerase III holoenzyme which synthesizes a continuous strand.</text>
        <dbReference type="EC" id="5.6.2.3"/>
    </reaction>
</comment>
<comment type="catalytic activity">
    <reaction evidence="3">
        <text>ATP + H2O = ADP + phosphate + H(+)</text>
        <dbReference type="Rhea" id="RHEA:13065"/>
        <dbReference type="ChEBI" id="CHEBI:15377"/>
        <dbReference type="ChEBI" id="CHEBI:15378"/>
        <dbReference type="ChEBI" id="CHEBI:30616"/>
        <dbReference type="ChEBI" id="CHEBI:43474"/>
        <dbReference type="ChEBI" id="CHEBI:456216"/>
        <dbReference type="EC" id="5.6.2.3"/>
    </reaction>
</comment>
<comment type="cofactor">
    <cofactor evidence="1">
        <name>Mg(2+)</name>
        <dbReference type="ChEBI" id="CHEBI:18420"/>
    </cofactor>
</comment>
<comment type="subunit">
    <text evidence="2">Monomer.</text>
</comment>
<comment type="similarity">
    <text evidence="4">Belongs to the helicase family. PIF1 subfamily.</text>
</comment>
<reference key="1">
    <citation type="journal article" date="2004" name="Science">
        <title>A predator unmasked: life cycle of Bdellovibrio bacteriovorus from a genomic perspective.</title>
        <authorList>
            <person name="Rendulic S."/>
            <person name="Jagtap P."/>
            <person name="Rosinus A."/>
            <person name="Eppinger M."/>
            <person name="Baar C."/>
            <person name="Lanz C."/>
            <person name="Keller H."/>
            <person name="Lambert C."/>
            <person name="Evans K.J."/>
            <person name="Goesmann A."/>
            <person name="Meyer F."/>
            <person name="Sockett R.E."/>
            <person name="Schuster S.C."/>
        </authorList>
    </citation>
    <scope>NUCLEOTIDE SEQUENCE [LARGE SCALE GENOMIC DNA]</scope>
    <source>
        <strain>ATCC 15356 / DSM 50701 / NCIMB 9529 / HD100</strain>
    </source>
</reference>
<reference key="2">
    <citation type="journal article" date="2013" name="Nature">
        <title>Pif1 family helicases suppress genome instability at G-quadruplex motifs.</title>
        <authorList>
            <person name="Paeschke K."/>
            <person name="Bochman M.L."/>
            <person name="Garcia P.D."/>
            <person name="Cejka P."/>
            <person name="Friedman K.L."/>
            <person name="Kowalczykowski S.C."/>
            <person name="Zakian V.A."/>
        </authorList>
    </citation>
    <scope>FUNCTION IN G4-UNWINDING</scope>
    <scope>CATALYTIC ACTIVITY</scope>
    <source>
        <strain>ATCC 15356 / DSM 50701 / NCIMB 9529 / HD100</strain>
    </source>
</reference>
<sequence length="439" mass="49135">MNSESKCYRFYICFARLGSGMIAGLMPVHEIELSPEQASALDLLRSGENVFLTGGAGSGKSFLIRQFMRELDPKEMPILASTGAAAVLLGGRTFHSFFGLGIMEGGADATYERASKDKRLMSRLRKVEGVIIDEISMIPGQALMIAEALSQRARESKLPWGGMRVIAVGDFAQLPPVTHTGQRDWCFLNGVWEVSGFQTVMLSHNQRVSDNLFLDVLSDVRHGKVTERVREFLNEHVQDHDEDDPGTRLFPRKINAEKFNERKLAEIDETEVVIESIYSGSERHIETLKKASPIAEKLILKIGCQVMFLQNDPQRRWVNGTRGTVVDITADQITVRKDRGREVQVSKSSFAIQDAEGNIMAQVEQFPLTLAYATTIHKSQGATLDDLWCDLSQLWEPGQAYVALSRLRSAKGLHLIGWNPRSIIVDPKVLHFYKQFEGL</sequence>
<name>PIF1_BDEBA</name>
<keyword id="KW-0067">ATP-binding</keyword>
<keyword id="KW-0227">DNA damage</keyword>
<keyword id="KW-0233">DNA recombination</keyword>
<keyword id="KW-0234">DNA repair</keyword>
<keyword id="KW-0238">DNA-binding</keyword>
<keyword id="KW-0347">Helicase</keyword>
<keyword id="KW-0378">Hydrolase</keyword>
<keyword id="KW-0413">Isomerase</keyword>
<keyword id="KW-0547">Nucleotide-binding</keyword>
<keyword id="KW-1185">Reference proteome</keyword>